<dbReference type="EMBL" id="CU329671">
    <property type="protein sequence ID" value="CAB39854.1"/>
    <property type="molecule type" value="Genomic_DNA"/>
</dbReference>
<dbReference type="PIR" id="T40103">
    <property type="entry name" value="T40103"/>
</dbReference>
<dbReference type="RefSeq" id="NP_596222.1">
    <property type="nucleotide sequence ID" value="NM_001022141.2"/>
</dbReference>
<dbReference type="BioGRID" id="276966">
    <property type="interactions" value="8"/>
</dbReference>
<dbReference type="FunCoup" id="O74796">
    <property type="interactions" value="116"/>
</dbReference>
<dbReference type="STRING" id="284812.O74796"/>
<dbReference type="PaxDb" id="4896-SPBC2A9.12.1"/>
<dbReference type="EnsemblFungi" id="SPBC2A9.12.1">
    <property type="protein sequence ID" value="SPBC2A9.12.1:pep"/>
    <property type="gene ID" value="SPBC2A9.12"/>
</dbReference>
<dbReference type="GeneID" id="2540438"/>
<dbReference type="KEGG" id="spo:2540438"/>
<dbReference type="PomBase" id="SPBC2A9.12">
    <property type="gene designation" value="orc6"/>
</dbReference>
<dbReference type="VEuPathDB" id="FungiDB:SPBC2A9.12"/>
<dbReference type="eggNOG" id="ENOG502SGNU">
    <property type="taxonomic scope" value="Eukaryota"/>
</dbReference>
<dbReference type="HOGENOM" id="CLU_1074255_0_0_1"/>
<dbReference type="InParanoid" id="O74796"/>
<dbReference type="OMA" id="RPYMAAH"/>
<dbReference type="Reactome" id="R-SPO-176187">
    <property type="pathway name" value="Activation of ATR in response to replication stress"/>
</dbReference>
<dbReference type="Reactome" id="R-SPO-68616">
    <property type="pathway name" value="Assembly of the ORC complex at the origin of replication"/>
</dbReference>
<dbReference type="Reactome" id="R-SPO-68689">
    <property type="pathway name" value="CDC6 association with the ORC:origin complex"/>
</dbReference>
<dbReference type="Reactome" id="R-SPO-68949">
    <property type="pathway name" value="Orc1 removal from chromatin"/>
</dbReference>
<dbReference type="Reactome" id="R-SPO-68962">
    <property type="pathway name" value="Activation of the pre-replicative complex"/>
</dbReference>
<dbReference type="PRO" id="PR:O74796"/>
<dbReference type="Proteomes" id="UP000002485">
    <property type="component" value="Chromosome II"/>
</dbReference>
<dbReference type="GO" id="GO:0000785">
    <property type="term" value="C:chromatin"/>
    <property type="evidence" value="ECO:0000314"/>
    <property type="project" value="PomBase"/>
</dbReference>
<dbReference type="GO" id="GO:0005829">
    <property type="term" value="C:cytosol"/>
    <property type="evidence" value="ECO:0007005"/>
    <property type="project" value="PomBase"/>
</dbReference>
<dbReference type="GO" id="GO:0031261">
    <property type="term" value="C:DNA replication preinitiation complex"/>
    <property type="evidence" value="ECO:0000305"/>
    <property type="project" value="PomBase"/>
</dbReference>
<dbReference type="GO" id="GO:0005664">
    <property type="term" value="C:nuclear origin of replication recognition complex"/>
    <property type="evidence" value="ECO:0000314"/>
    <property type="project" value="UniProtKB"/>
</dbReference>
<dbReference type="GO" id="GO:0005656">
    <property type="term" value="C:nuclear pre-replicative complex"/>
    <property type="evidence" value="ECO:0000305"/>
    <property type="project" value="PomBase"/>
</dbReference>
<dbReference type="GO" id="GO:0043596">
    <property type="term" value="C:nuclear replication fork"/>
    <property type="evidence" value="ECO:0000305"/>
    <property type="project" value="PomBase"/>
</dbReference>
<dbReference type="GO" id="GO:0005634">
    <property type="term" value="C:nucleus"/>
    <property type="evidence" value="ECO:0007005"/>
    <property type="project" value="PomBase"/>
</dbReference>
<dbReference type="GO" id="GO:0003688">
    <property type="term" value="F:DNA replication origin binding"/>
    <property type="evidence" value="ECO:0000314"/>
    <property type="project" value="UniProtKB"/>
</dbReference>
<dbReference type="GO" id="GO:0006270">
    <property type="term" value="P:DNA replication initiation"/>
    <property type="evidence" value="ECO:0000318"/>
    <property type="project" value="GO_Central"/>
</dbReference>
<dbReference type="InterPro" id="IPR008721">
    <property type="entry name" value="ORC6_cyclin_first"/>
</dbReference>
<dbReference type="InterPro" id="IPR020529">
    <property type="entry name" value="ORC6_met/pln"/>
</dbReference>
<dbReference type="PANTHER" id="PTHR13394">
    <property type="entry name" value="ORIGIN RECOGNITION COMPLEX SUBUNIT 6"/>
    <property type="match status" value="1"/>
</dbReference>
<dbReference type="PANTHER" id="PTHR13394:SF0">
    <property type="entry name" value="ORIGIN RECOGNITION COMPLEX SUBUNIT 6"/>
    <property type="match status" value="1"/>
</dbReference>
<dbReference type="Pfam" id="PF05460">
    <property type="entry name" value="ORC6"/>
    <property type="match status" value="1"/>
</dbReference>
<reference key="1">
    <citation type="journal article" date="2002" name="Nature">
        <title>The genome sequence of Schizosaccharomyces pombe.</title>
        <authorList>
            <person name="Wood V."/>
            <person name="Gwilliam R."/>
            <person name="Rajandream M.A."/>
            <person name="Lyne M.H."/>
            <person name="Lyne R."/>
            <person name="Stewart A."/>
            <person name="Sgouros J.G."/>
            <person name="Peat N."/>
            <person name="Hayles J."/>
            <person name="Baker S.G."/>
            <person name="Basham D."/>
            <person name="Bowman S."/>
            <person name="Brooks K."/>
            <person name="Brown D."/>
            <person name="Brown S."/>
            <person name="Chillingworth T."/>
            <person name="Churcher C.M."/>
            <person name="Collins M."/>
            <person name="Connor R."/>
            <person name="Cronin A."/>
            <person name="Davis P."/>
            <person name="Feltwell T."/>
            <person name="Fraser A."/>
            <person name="Gentles S."/>
            <person name="Goble A."/>
            <person name="Hamlin N."/>
            <person name="Harris D.E."/>
            <person name="Hidalgo J."/>
            <person name="Hodgson G."/>
            <person name="Holroyd S."/>
            <person name="Hornsby T."/>
            <person name="Howarth S."/>
            <person name="Huckle E.J."/>
            <person name="Hunt S."/>
            <person name="Jagels K."/>
            <person name="James K.D."/>
            <person name="Jones L."/>
            <person name="Jones M."/>
            <person name="Leather S."/>
            <person name="McDonald S."/>
            <person name="McLean J."/>
            <person name="Mooney P."/>
            <person name="Moule S."/>
            <person name="Mungall K.L."/>
            <person name="Murphy L.D."/>
            <person name="Niblett D."/>
            <person name="Odell C."/>
            <person name="Oliver K."/>
            <person name="O'Neil S."/>
            <person name="Pearson D."/>
            <person name="Quail M.A."/>
            <person name="Rabbinowitsch E."/>
            <person name="Rutherford K.M."/>
            <person name="Rutter S."/>
            <person name="Saunders D."/>
            <person name="Seeger K."/>
            <person name="Sharp S."/>
            <person name="Skelton J."/>
            <person name="Simmonds M.N."/>
            <person name="Squares R."/>
            <person name="Squares S."/>
            <person name="Stevens K."/>
            <person name="Taylor K."/>
            <person name="Taylor R.G."/>
            <person name="Tivey A."/>
            <person name="Walsh S.V."/>
            <person name="Warren T."/>
            <person name="Whitehead S."/>
            <person name="Woodward J.R."/>
            <person name="Volckaert G."/>
            <person name="Aert R."/>
            <person name="Robben J."/>
            <person name="Grymonprez B."/>
            <person name="Weltjens I."/>
            <person name="Vanstreels E."/>
            <person name="Rieger M."/>
            <person name="Schaefer M."/>
            <person name="Mueller-Auer S."/>
            <person name="Gabel C."/>
            <person name="Fuchs M."/>
            <person name="Duesterhoeft A."/>
            <person name="Fritzc C."/>
            <person name="Holzer E."/>
            <person name="Moestl D."/>
            <person name="Hilbert H."/>
            <person name="Borzym K."/>
            <person name="Langer I."/>
            <person name="Beck A."/>
            <person name="Lehrach H."/>
            <person name="Reinhardt R."/>
            <person name="Pohl T.M."/>
            <person name="Eger P."/>
            <person name="Zimmermann W."/>
            <person name="Wedler H."/>
            <person name="Wambutt R."/>
            <person name="Purnelle B."/>
            <person name="Goffeau A."/>
            <person name="Cadieu E."/>
            <person name="Dreano S."/>
            <person name="Gloux S."/>
            <person name="Lelaure V."/>
            <person name="Mottier S."/>
            <person name="Galibert F."/>
            <person name="Aves S.J."/>
            <person name="Xiang Z."/>
            <person name="Hunt C."/>
            <person name="Moore K."/>
            <person name="Hurst S.M."/>
            <person name="Lucas M."/>
            <person name="Rochet M."/>
            <person name="Gaillardin C."/>
            <person name="Tallada V.A."/>
            <person name="Garzon A."/>
            <person name="Thode G."/>
            <person name="Daga R.R."/>
            <person name="Cruzado L."/>
            <person name="Jimenez J."/>
            <person name="Sanchez M."/>
            <person name="del Rey F."/>
            <person name="Benito J."/>
            <person name="Dominguez A."/>
            <person name="Revuelta J.L."/>
            <person name="Moreno S."/>
            <person name="Armstrong J."/>
            <person name="Forsburg S.L."/>
            <person name="Cerutti L."/>
            <person name="Lowe T."/>
            <person name="McCombie W.R."/>
            <person name="Paulsen I."/>
            <person name="Potashkin J."/>
            <person name="Shpakovski G.V."/>
            <person name="Ussery D."/>
            <person name="Barrell B.G."/>
            <person name="Nurse P."/>
        </authorList>
    </citation>
    <scope>NUCLEOTIDE SEQUENCE [LARGE SCALE GENOMIC DNA]</scope>
    <source>
        <strain>972 / ATCC 24843</strain>
    </source>
</reference>
<reference evidence="5" key="2">
    <citation type="journal article" date="1999" name="Proc. Natl. Acad. Sci. U.S.A.">
        <title>Identification and reconstitution of the origin recognition complex from Schizosaccharomyces pombe.</title>
        <authorList>
            <person name="Moon K.-Y."/>
            <person name="Kong D."/>
            <person name="Lee J.-K."/>
            <person name="Raychaudhuri S."/>
            <person name="Hurwitz J."/>
        </authorList>
    </citation>
    <scope>PROTEIN SEQUENCE OF 3-10; 12-26; 217-236 AND 238-244</scope>
    <scope>SUBUNIT</scope>
    <source>
        <strain evidence="2">KM1</strain>
    </source>
</reference>
<reference evidence="5" key="3">
    <citation type="journal article" date="2002" name="J. Biol. Chem.">
        <title>Purification and characterization of the Schizosaccharomyces pombe origin recognition complex: interaction with origin DNA and Cdc18 protein.</title>
        <authorList>
            <person name="Chuang R.-Y."/>
            <person name="Chretien L."/>
            <person name="Dai J."/>
            <person name="Kelly T.J."/>
        </authorList>
    </citation>
    <scope>CHARACTERIZATION OF ORC</scope>
    <scope>INTERACTION WITH CDC18</scope>
</reference>
<feature type="chain" id="PRO_0000127101" description="Origin recognition complex subunit 6">
    <location>
        <begin position="1"/>
        <end position="264"/>
    </location>
</feature>
<sequence>MERQQIIESLRRIIPTESTEYNERLISLGESFLEWSKYKHNLKATEELCRPYMAAHLACELLSNDLNLEINLLATPIPKKKYYKLFTYFQEILSPLTKSLAAKDDLMETITYLCTKLGGSTAIPYVKQLVKAVVTNDMRIEHKRGIIIAAYLLVSAKAFGKDELHINHTERRKAQSVLQDTSSALQIQYWMHVLSESWQYKEIPLNGIEGYESQKQRIKPWSGIASMIQIDYEKRLQNYPIWKACIEERIQYYKSQLEKDGTAS</sequence>
<evidence type="ECO:0000250" key="1">
    <source>
        <dbReference type="UniProtKB" id="Q9Y5N6"/>
    </source>
</evidence>
<evidence type="ECO:0000269" key="2">
    <source>
    </source>
</evidence>
<evidence type="ECO:0000269" key="3">
    <source>
    </source>
</evidence>
<evidence type="ECO:0000303" key="4">
    <source>
    </source>
</evidence>
<evidence type="ECO:0000305" key="5"/>
<gene>
    <name type="primary">orc6</name>
    <name type="ORF">SPBC2A9.12</name>
    <name type="ORF">SPBC2D10.02</name>
</gene>
<proteinExistence type="evidence at protein level"/>
<keyword id="KW-0903">Direct protein sequencing</keyword>
<keyword id="KW-0235">DNA replication</keyword>
<keyword id="KW-0238">DNA-binding</keyword>
<keyword id="KW-0539">Nucleus</keyword>
<keyword id="KW-1185">Reference proteome</keyword>
<protein>
    <recommendedName>
        <fullName>Origin recognition complex subunit 6</fullName>
    </recommendedName>
</protein>
<name>ORC6_SCHPO</name>
<organism>
    <name type="scientific">Schizosaccharomyces pombe (strain 972 / ATCC 24843)</name>
    <name type="common">Fission yeast</name>
    <dbReference type="NCBI Taxonomy" id="284812"/>
    <lineage>
        <taxon>Eukaryota</taxon>
        <taxon>Fungi</taxon>
        <taxon>Dikarya</taxon>
        <taxon>Ascomycota</taxon>
        <taxon>Taphrinomycotina</taxon>
        <taxon>Schizosaccharomycetes</taxon>
        <taxon>Schizosaccharomycetales</taxon>
        <taxon>Schizosaccharomycetaceae</taxon>
        <taxon>Schizosaccharomyces</taxon>
    </lineage>
</organism>
<accession>O74796</accession>
<accession>Q1MTP2</accession>
<comment type="function">
    <text evidence="1 2 3">Component of the origin recognition complex (ORC) that binds origins of replication. It has a role in both chromosomal replication and mating type transcriptional silencing. ORC binds to multiple sites within the ars1 origin of DNA replication in an ATP-independent manner.</text>
</comment>
<comment type="subunit">
    <text evidence="2 3">ORC is composed of six subunits. ORC interacts with cdc18, recruiting it to the ars1 origin of replication.</text>
</comment>
<comment type="subcellular location">
    <subcellularLocation>
        <location>Nucleus</location>
    </subcellularLocation>
</comment>
<comment type="similarity">
    <text evidence="4">Belongs to the ORC6 family.</text>
</comment>